<comment type="function">
    <text evidence="2">Probable GTPase that plays a role in the mitochondrial ribosomal small subunit assembly. Specifically binds the 12S mitochondrial rRNA (12S mt-rRNA) to a 33 nucleotide section delineating the 3' terminal stem-loop region. May act as a chaperone that protects the 12S mt-rRNA on the 28S mitoribosomal subunit during ribosomal small subunit assembly (By similarity).</text>
</comment>
<comment type="subcellular location">
    <subcellularLocation>
        <location evidence="1">Mitochondrion matrix</location>
    </subcellularLocation>
    <subcellularLocation>
        <location evidence="1">Mitochondrion inner membrane</location>
        <topology evidence="1">Peripheral membrane protein</topology>
    </subcellularLocation>
    <text evidence="1">Localizes on the matrix side on the mitochondrial inner membrane.</text>
</comment>
<comment type="similarity">
    <text evidence="5 6">Belongs to the TRAFAC class TrmE-Era-EngA-EngB-Septin-like GTPase superfamily. Era GTPase family.</text>
</comment>
<proteinExistence type="evidence at transcript level"/>
<sequence length="447" mass="50021">MTLRSCETFLRRSLRFSTALNLTAFPEHEQLYLRVSSGCSVFRPQTVRKCLFHWTPACTVSQGVFLDRLQKGAAVTDESLCNQPVSVSPDRAQQFSLLMKDPDQPENAKSLKVAIVGSPNAGKSTLTNQLLGRKLFAVSSKVHTTRSRAVGVLTENDTQIVLLDTPGLTTQIKAKRHQLENSLLVDPFKSLKEADLVVVLVDVSDKWTRSKLSYEVLKCLALNPDVPAVLVLNKVDLLKNKALLLDITAQLTEGMVNGKKIRIHGASKPVRKAAAGANSRLKEKKAAGSLEDEADHEDKLKALKSHGGWPHFKDVFMLSSIDHEDVETLKRYLFVAAKPCQWQYHSEVLTDQSPEDVCFNTIREKLLQNLPKEVPYTMTQEIEVWKESEDGVLDISIKLYVQKETHMKMVIGPGGQLITRINQEAGNDLMKIFLCNVRLKISVKLRK</sequence>
<name>ERAL1_DANRE</name>
<keyword id="KW-0342">GTP-binding</keyword>
<keyword id="KW-0472">Membrane</keyword>
<keyword id="KW-0496">Mitochondrion</keyword>
<keyword id="KW-0999">Mitochondrion inner membrane</keyword>
<keyword id="KW-0547">Nucleotide-binding</keyword>
<keyword id="KW-1185">Reference proteome</keyword>
<keyword id="KW-0690">Ribosome biogenesis</keyword>
<keyword id="KW-0694">RNA-binding</keyword>
<keyword id="KW-0699">rRNA-binding</keyword>
<keyword id="KW-0809">Transit peptide</keyword>
<organism>
    <name type="scientific">Danio rerio</name>
    <name type="common">Zebrafish</name>
    <name type="synonym">Brachydanio rerio</name>
    <dbReference type="NCBI Taxonomy" id="7955"/>
    <lineage>
        <taxon>Eukaryota</taxon>
        <taxon>Metazoa</taxon>
        <taxon>Chordata</taxon>
        <taxon>Craniata</taxon>
        <taxon>Vertebrata</taxon>
        <taxon>Euteleostomi</taxon>
        <taxon>Actinopterygii</taxon>
        <taxon>Neopterygii</taxon>
        <taxon>Teleostei</taxon>
        <taxon>Ostariophysi</taxon>
        <taxon>Cypriniformes</taxon>
        <taxon>Danionidae</taxon>
        <taxon>Danioninae</taxon>
        <taxon>Danio</taxon>
    </lineage>
</organism>
<feature type="transit peptide" description="Mitochondrion" evidence="4">
    <location>
        <begin position="1"/>
        <end position="18"/>
    </location>
</feature>
<feature type="chain" id="PRO_0000404548" description="GTPase Era, mitochondrial">
    <location>
        <begin position="19"/>
        <end position="447"/>
    </location>
</feature>
<feature type="domain" description="Era-type G" evidence="5">
    <location>
        <begin position="109"/>
        <end position="340"/>
    </location>
</feature>
<feature type="domain" description="KH type-2">
    <location>
        <begin position="370"/>
        <end position="447"/>
    </location>
</feature>
<feature type="region of interest" description="G1" evidence="5">
    <location>
        <begin position="117"/>
        <end position="124"/>
    </location>
</feature>
<feature type="region of interest" description="G2" evidence="5">
    <location>
        <begin position="143"/>
        <end position="147"/>
    </location>
</feature>
<feature type="region of interest" description="G3" evidence="5">
    <location>
        <begin position="164"/>
        <end position="167"/>
    </location>
</feature>
<feature type="region of interest" description="G4" evidence="5">
    <location>
        <begin position="233"/>
        <end position="236"/>
    </location>
</feature>
<feature type="region of interest" description="G5" evidence="5">
    <location>
        <begin position="318"/>
        <end position="320"/>
    </location>
</feature>
<feature type="binding site" evidence="3">
    <location>
        <begin position="117"/>
        <end position="124"/>
    </location>
    <ligand>
        <name>GTP</name>
        <dbReference type="ChEBI" id="CHEBI:37565"/>
    </ligand>
</feature>
<feature type="binding site" evidence="3">
    <location>
        <begin position="164"/>
        <end position="168"/>
    </location>
    <ligand>
        <name>GTP</name>
        <dbReference type="ChEBI" id="CHEBI:37565"/>
    </ligand>
</feature>
<feature type="binding site" evidence="3">
    <location>
        <begin position="233"/>
        <end position="236"/>
    </location>
    <ligand>
        <name>GTP</name>
        <dbReference type="ChEBI" id="CHEBI:37565"/>
    </ligand>
</feature>
<gene>
    <name type="primary">eral1</name>
    <name type="ORF">si:ch211-207c6.1</name>
</gene>
<accession>B0S6U7</accession>
<reference key="1">
    <citation type="journal article" date="2013" name="Nature">
        <title>The zebrafish reference genome sequence and its relationship to the human genome.</title>
        <authorList>
            <person name="Howe K."/>
            <person name="Clark M.D."/>
            <person name="Torroja C.F."/>
            <person name="Torrance J."/>
            <person name="Berthelot C."/>
            <person name="Muffato M."/>
            <person name="Collins J.E."/>
            <person name="Humphray S."/>
            <person name="McLaren K."/>
            <person name="Matthews L."/>
            <person name="McLaren S."/>
            <person name="Sealy I."/>
            <person name="Caccamo M."/>
            <person name="Churcher C."/>
            <person name="Scott C."/>
            <person name="Barrett J.C."/>
            <person name="Koch R."/>
            <person name="Rauch G.J."/>
            <person name="White S."/>
            <person name="Chow W."/>
            <person name="Kilian B."/>
            <person name="Quintais L.T."/>
            <person name="Guerra-Assuncao J.A."/>
            <person name="Zhou Y."/>
            <person name="Gu Y."/>
            <person name="Yen J."/>
            <person name="Vogel J.H."/>
            <person name="Eyre T."/>
            <person name="Redmond S."/>
            <person name="Banerjee R."/>
            <person name="Chi J."/>
            <person name="Fu B."/>
            <person name="Langley E."/>
            <person name="Maguire S.F."/>
            <person name="Laird G.K."/>
            <person name="Lloyd D."/>
            <person name="Kenyon E."/>
            <person name="Donaldson S."/>
            <person name="Sehra H."/>
            <person name="Almeida-King J."/>
            <person name="Loveland J."/>
            <person name="Trevanion S."/>
            <person name="Jones M."/>
            <person name="Quail M."/>
            <person name="Willey D."/>
            <person name="Hunt A."/>
            <person name="Burton J."/>
            <person name="Sims S."/>
            <person name="McLay K."/>
            <person name="Plumb B."/>
            <person name="Davis J."/>
            <person name="Clee C."/>
            <person name="Oliver K."/>
            <person name="Clark R."/>
            <person name="Riddle C."/>
            <person name="Elliot D."/>
            <person name="Threadgold G."/>
            <person name="Harden G."/>
            <person name="Ware D."/>
            <person name="Begum S."/>
            <person name="Mortimore B."/>
            <person name="Kerry G."/>
            <person name="Heath P."/>
            <person name="Phillimore B."/>
            <person name="Tracey A."/>
            <person name="Corby N."/>
            <person name="Dunn M."/>
            <person name="Johnson C."/>
            <person name="Wood J."/>
            <person name="Clark S."/>
            <person name="Pelan S."/>
            <person name="Griffiths G."/>
            <person name="Smith M."/>
            <person name="Glithero R."/>
            <person name="Howden P."/>
            <person name="Barker N."/>
            <person name="Lloyd C."/>
            <person name="Stevens C."/>
            <person name="Harley J."/>
            <person name="Holt K."/>
            <person name="Panagiotidis G."/>
            <person name="Lovell J."/>
            <person name="Beasley H."/>
            <person name="Henderson C."/>
            <person name="Gordon D."/>
            <person name="Auger K."/>
            <person name="Wright D."/>
            <person name="Collins J."/>
            <person name="Raisen C."/>
            <person name="Dyer L."/>
            <person name="Leung K."/>
            <person name="Robertson L."/>
            <person name="Ambridge K."/>
            <person name="Leongamornlert D."/>
            <person name="McGuire S."/>
            <person name="Gilderthorp R."/>
            <person name="Griffiths C."/>
            <person name="Manthravadi D."/>
            <person name="Nichol S."/>
            <person name="Barker G."/>
            <person name="Whitehead S."/>
            <person name="Kay M."/>
            <person name="Brown J."/>
            <person name="Murnane C."/>
            <person name="Gray E."/>
            <person name="Humphries M."/>
            <person name="Sycamore N."/>
            <person name="Barker D."/>
            <person name="Saunders D."/>
            <person name="Wallis J."/>
            <person name="Babbage A."/>
            <person name="Hammond S."/>
            <person name="Mashreghi-Mohammadi M."/>
            <person name="Barr L."/>
            <person name="Martin S."/>
            <person name="Wray P."/>
            <person name="Ellington A."/>
            <person name="Matthews N."/>
            <person name="Ellwood M."/>
            <person name="Woodmansey R."/>
            <person name="Clark G."/>
            <person name="Cooper J."/>
            <person name="Tromans A."/>
            <person name="Grafham D."/>
            <person name="Skuce C."/>
            <person name="Pandian R."/>
            <person name="Andrews R."/>
            <person name="Harrison E."/>
            <person name="Kimberley A."/>
            <person name="Garnett J."/>
            <person name="Fosker N."/>
            <person name="Hall R."/>
            <person name="Garner P."/>
            <person name="Kelly D."/>
            <person name="Bird C."/>
            <person name="Palmer S."/>
            <person name="Gehring I."/>
            <person name="Berger A."/>
            <person name="Dooley C.M."/>
            <person name="Ersan-Urun Z."/>
            <person name="Eser C."/>
            <person name="Geiger H."/>
            <person name="Geisler M."/>
            <person name="Karotki L."/>
            <person name="Kirn A."/>
            <person name="Konantz J."/>
            <person name="Konantz M."/>
            <person name="Oberlander M."/>
            <person name="Rudolph-Geiger S."/>
            <person name="Teucke M."/>
            <person name="Lanz C."/>
            <person name="Raddatz G."/>
            <person name="Osoegawa K."/>
            <person name="Zhu B."/>
            <person name="Rapp A."/>
            <person name="Widaa S."/>
            <person name="Langford C."/>
            <person name="Yang F."/>
            <person name="Schuster S.C."/>
            <person name="Carter N.P."/>
            <person name="Harrow J."/>
            <person name="Ning Z."/>
            <person name="Herrero J."/>
            <person name="Searle S.M."/>
            <person name="Enright A."/>
            <person name="Geisler R."/>
            <person name="Plasterk R.H."/>
            <person name="Lee C."/>
            <person name="Westerfield M."/>
            <person name="de Jong P.J."/>
            <person name="Zon L.I."/>
            <person name="Postlethwait J.H."/>
            <person name="Nusslein-Volhard C."/>
            <person name="Hubbard T.J."/>
            <person name="Roest Crollius H."/>
            <person name="Rogers J."/>
            <person name="Stemple D.L."/>
        </authorList>
    </citation>
    <scope>NUCLEOTIDE SEQUENCE [LARGE SCALE GENOMIC DNA]</scope>
    <source>
        <strain>Tuebingen</strain>
    </source>
</reference>
<reference key="2">
    <citation type="submission" date="2008-04" db="EMBL/GenBank/DDBJ databases">
        <authorList>
            <consortium name="NIH - Zebrafish Gene Collection (ZGC) project"/>
        </authorList>
    </citation>
    <scope>NUCLEOTIDE SEQUENCE [LARGE SCALE MRNA]</scope>
</reference>
<evidence type="ECO:0000250" key="1"/>
<evidence type="ECO:0000250" key="2">
    <source>
        <dbReference type="UniProtKB" id="O75616"/>
    </source>
</evidence>
<evidence type="ECO:0000250" key="3">
    <source>
        <dbReference type="UniProtKB" id="P06616"/>
    </source>
</evidence>
<evidence type="ECO:0000255" key="4"/>
<evidence type="ECO:0000255" key="5">
    <source>
        <dbReference type="PROSITE-ProRule" id="PRU01050"/>
    </source>
</evidence>
<evidence type="ECO:0000305" key="6"/>
<protein>
    <recommendedName>
        <fullName>GTPase Era, mitochondrial</fullName>
    </recommendedName>
    <alternativeName>
        <fullName>ERA-like protein 1</fullName>
    </alternativeName>
</protein>
<dbReference type="EMBL" id="BX548073">
    <property type="protein sequence ID" value="CAQ15626.1"/>
    <property type="molecule type" value="Genomic_DNA"/>
</dbReference>
<dbReference type="EMBL" id="BC163468">
    <property type="protein sequence ID" value="AAI63468.1"/>
    <property type="molecule type" value="mRNA"/>
</dbReference>
<dbReference type="EMBL" id="BC163480">
    <property type="protein sequence ID" value="AAI63480.1"/>
    <property type="molecule type" value="mRNA"/>
</dbReference>
<dbReference type="RefSeq" id="NP_001122219.1">
    <property type="nucleotide sequence ID" value="NM_001128747.1"/>
</dbReference>
<dbReference type="SMR" id="B0S6U7"/>
<dbReference type="FunCoup" id="B0S6U7">
    <property type="interactions" value="1262"/>
</dbReference>
<dbReference type="STRING" id="7955.ENSDARP00000078213"/>
<dbReference type="PaxDb" id="7955-ENSDARP00000078213"/>
<dbReference type="PeptideAtlas" id="B0S6U7"/>
<dbReference type="Ensembl" id="ENSDART00000083778">
    <property type="protein sequence ID" value="ENSDARP00000078213"/>
    <property type="gene ID" value="ENSDARG00000059887"/>
</dbReference>
<dbReference type="GeneID" id="569087"/>
<dbReference type="KEGG" id="dre:569087"/>
<dbReference type="AGR" id="ZFIN:ZDB-GENE-060526-84"/>
<dbReference type="CTD" id="26284"/>
<dbReference type="ZFIN" id="ZDB-GENE-060526-84">
    <property type="gene designation" value="eral1"/>
</dbReference>
<dbReference type="eggNOG" id="KOG1423">
    <property type="taxonomic scope" value="Eukaryota"/>
</dbReference>
<dbReference type="HOGENOM" id="CLU_038009_2_1_1"/>
<dbReference type="InParanoid" id="B0S6U7"/>
<dbReference type="OMA" id="WAEVDVI"/>
<dbReference type="OrthoDB" id="8954335at2759"/>
<dbReference type="PhylomeDB" id="B0S6U7"/>
<dbReference type="TreeFam" id="TF321650"/>
<dbReference type="Reactome" id="R-DRE-5389840">
    <property type="pathway name" value="Mitochondrial translation elongation"/>
</dbReference>
<dbReference type="Reactome" id="R-DRE-5419276">
    <property type="pathway name" value="Mitochondrial translation termination"/>
</dbReference>
<dbReference type="PRO" id="PR:B0S6U7"/>
<dbReference type="Proteomes" id="UP000000437">
    <property type="component" value="Chromosome 5"/>
</dbReference>
<dbReference type="Bgee" id="ENSDARG00000059887">
    <property type="expression patterns" value="Expressed in spleen and 20 other cell types or tissues"/>
</dbReference>
<dbReference type="GO" id="GO:0005743">
    <property type="term" value="C:mitochondrial inner membrane"/>
    <property type="evidence" value="ECO:0007669"/>
    <property type="project" value="UniProtKB-SubCell"/>
</dbReference>
<dbReference type="GO" id="GO:0005759">
    <property type="term" value="C:mitochondrial matrix"/>
    <property type="evidence" value="ECO:0000250"/>
    <property type="project" value="UniProtKB"/>
</dbReference>
<dbReference type="GO" id="GO:0005525">
    <property type="term" value="F:GTP binding"/>
    <property type="evidence" value="ECO:0007669"/>
    <property type="project" value="UniProtKB-KW"/>
</dbReference>
<dbReference type="GO" id="GO:0043024">
    <property type="term" value="F:ribosomal small subunit binding"/>
    <property type="evidence" value="ECO:0000250"/>
    <property type="project" value="UniProtKB"/>
</dbReference>
<dbReference type="GO" id="GO:0019843">
    <property type="term" value="F:rRNA binding"/>
    <property type="evidence" value="ECO:0000250"/>
    <property type="project" value="UniProtKB"/>
</dbReference>
<dbReference type="GO" id="GO:0000028">
    <property type="term" value="P:ribosomal small subunit assembly"/>
    <property type="evidence" value="ECO:0000250"/>
    <property type="project" value="UniProtKB"/>
</dbReference>
<dbReference type="CDD" id="cd04163">
    <property type="entry name" value="Era"/>
    <property type="match status" value="1"/>
</dbReference>
<dbReference type="CDD" id="cd22534">
    <property type="entry name" value="KH-II_Era"/>
    <property type="match status" value="1"/>
</dbReference>
<dbReference type="FunFam" id="3.30.300.20:FF:000016">
    <property type="entry name" value="GTPase Era, mitochondrial isoform 1"/>
    <property type="match status" value="1"/>
</dbReference>
<dbReference type="Gene3D" id="3.30.300.20">
    <property type="match status" value="1"/>
</dbReference>
<dbReference type="Gene3D" id="3.40.50.300">
    <property type="entry name" value="P-loop containing nucleotide triphosphate hydrolases"/>
    <property type="match status" value="1"/>
</dbReference>
<dbReference type="HAMAP" id="MF_00367">
    <property type="entry name" value="GTPase_Era"/>
    <property type="match status" value="1"/>
</dbReference>
<dbReference type="InterPro" id="IPR030388">
    <property type="entry name" value="G_ERA_dom"/>
</dbReference>
<dbReference type="InterPro" id="IPR006073">
    <property type="entry name" value="GTP-bd"/>
</dbReference>
<dbReference type="InterPro" id="IPR005662">
    <property type="entry name" value="GTPase_Era-like"/>
</dbReference>
<dbReference type="InterPro" id="IPR015946">
    <property type="entry name" value="KH_dom-like_a/b"/>
</dbReference>
<dbReference type="InterPro" id="IPR004044">
    <property type="entry name" value="KH_dom_type_2"/>
</dbReference>
<dbReference type="InterPro" id="IPR009019">
    <property type="entry name" value="KH_sf_prok-type"/>
</dbReference>
<dbReference type="InterPro" id="IPR027417">
    <property type="entry name" value="P-loop_NTPase"/>
</dbReference>
<dbReference type="InterPro" id="IPR005225">
    <property type="entry name" value="Small_GTP-bd"/>
</dbReference>
<dbReference type="NCBIfam" id="TIGR00231">
    <property type="entry name" value="small_GTP"/>
    <property type="match status" value="1"/>
</dbReference>
<dbReference type="PANTHER" id="PTHR42698">
    <property type="entry name" value="GTPASE ERA"/>
    <property type="match status" value="1"/>
</dbReference>
<dbReference type="PANTHER" id="PTHR42698:SF1">
    <property type="entry name" value="GTPASE ERA, MITOCHONDRIAL"/>
    <property type="match status" value="1"/>
</dbReference>
<dbReference type="Pfam" id="PF07650">
    <property type="entry name" value="KH_2"/>
    <property type="match status" value="1"/>
</dbReference>
<dbReference type="Pfam" id="PF01926">
    <property type="entry name" value="MMR_HSR1"/>
    <property type="match status" value="1"/>
</dbReference>
<dbReference type="PRINTS" id="PR00449">
    <property type="entry name" value="RASTRNSFRMNG"/>
</dbReference>
<dbReference type="SUPFAM" id="SSF52540">
    <property type="entry name" value="P-loop containing nucleoside triphosphate hydrolases"/>
    <property type="match status" value="1"/>
</dbReference>
<dbReference type="SUPFAM" id="SSF54814">
    <property type="entry name" value="Prokaryotic type KH domain (KH-domain type II)"/>
    <property type="match status" value="1"/>
</dbReference>
<dbReference type="PROSITE" id="PS51713">
    <property type="entry name" value="G_ERA"/>
    <property type="match status" value="1"/>
</dbReference>
<dbReference type="PROSITE" id="PS50823">
    <property type="entry name" value="KH_TYPE_2"/>
    <property type="match status" value="1"/>
</dbReference>